<proteinExistence type="inferred from homology"/>
<gene>
    <name evidence="1" type="primary">rpmB</name>
    <name type="ordered locus">Vapar_1282</name>
</gene>
<protein>
    <recommendedName>
        <fullName evidence="1">Large ribosomal subunit protein bL28</fullName>
    </recommendedName>
    <alternativeName>
        <fullName evidence="2">50S ribosomal protein L28</fullName>
    </alternativeName>
</protein>
<name>RL28_VARPS</name>
<feature type="chain" id="PRO_1000205614" description="Large ribosomal subunit protein bL28">
    <location>
        <begin position="1"/>
        <end position="77"/>
    </location>
</feature>
<comment type="similarity">
    <text evidence="1">Belongs to the bacterial ribosomal protein bL28 family.</text>
</comment>
<accession>C5CRK1</accession>
<sequence>MARVCDVTGKGPMVGNNVSHANNKTKRRFLPNLQYRRFWVETENRWVRLRVSSAALRLIDKNGIDAVLADLRARGQA</sequence>
<reference key="1">
    <citation type="journal article" date="2011" name="J. Bacteriol.">
        <title>Complete genome sequence of the metabolically versatile plant growth-promoting endophyte, Variovorax paradoxus S110.</title>
        <authorList>
            <person name="Han J.I."/>
            <person name="Choi H.K."/>
            <person name="Lee S.W."/>
            <person name="Orwin P.M."/>
            <person name="Kim J."/>
            <person name="Laroe S.L."/>
            <person name="Kim T.G."/>
            <person name="O'Neil J."/>
            <person name="Leadbetter J.R."/>
            <person name="Lee S.Y."/>
            <person name="Hur C.G."/>
            <person name="Spain J.C."/>
            <person name="Ovchinnikova G."/>
            <person name="Goodwin L."/>
            <person name="Han C."/>
        </authorList>
    </citation>
    <scope>NUCLEOTIDE SEQUENCE [LARGE SCALE GENOMIC DNA]</scope>
    <source>
        <strain>S110</strain>
    </source>
</reference>
<keyword id="KW-0687">Ribonucleoprotein</keyword>
<keyword id="KW-0689">Ribosomal protein</keyword>
<evidence type="ECO:0000255" key="1">
    <source>
        <dbReference type="HAMAP-Rule" id="MF_00373"/>
    </source>
</evidence>
<evidence type="ECO:0000305" key="2"/>
<organism>
    <name type="scientific">Variovorax paradoxus (strain S110)</name>
    <dbReference type="NCBI Taxonomy" id="543728"/>
    <lineage>
        <taxon>Bacteria</taxon>
        <taxon>Pseudomonadati</taxon>
        <taxon>Pseudomonadota</taxon>
        <taxon>Betaproteobacteria</taxon>
        <taxon>Burkholderiales</taxon>
        <taxon>Comamonadaceae</taxon>
        <taxon>Variovorax</taxon>
    </lineage>
</organism>
<dbReference type="EMBL" id="CP001635">
    <property type="protein sequence ID" value="ACS17933.1"/>
    <property type="molecule type" value="Genomic_DNA"/>
</dbReference>
<dbReference type="SMR" id="C5CRK1"/>
<dbReference type="STRING" id="543728.Vapar_1282"/>
<dbReference type="KEGG" id="vap:Vapar_1282"/>
<dbReference type="eggNOG" id="COG0227">
    <property type="taxonomic scope" value="Bacteria"/>
</dbReference>
<dbReference type="HOGENOM" id="CLU_064548_3_1_4"/>
<dbReference type="OrthoDB" id="9805609at2"/>
<dbReference type="GO" id="GO:0022625">
    <property type="term" value="C:cytosolic large ribosomal subunit"/>
    <property type="evidence" value="ECO:0007669"/>
    <property type="project" value="TreeGrafter"/>
</dbReference>
<dbReference type="GO" id="GO:0003735">
    <property type="term" value="F:structural constituent of ribosome"/>
    <property type="evidence" value="ECO:0007669"/>
    <property type="project" value="InterPro"/>
</dbReference>
<dbReference type="GO" id="GO:0006412">
    <property type="term" value="P:translation"/>
    <property type="evidence" value="ECO:0007669"/>
    <property type="project" value="UniProtKB-UniRule"/>
</dbReference>
<dbReference type="FunFam" id="2.30.170.40:FF:000001">
    <property type="entry name" value="50S ribosomal protein L28"/>
    <property type="match status" value="1"/>
</dbReference>
<dbReference type="Gene3D" id="2.30.170.40">
    <property type="entry name" value="Ribosomal protein L28/L24"/>
    <property type="match status" value="1"/>
</dbReference>
<dbReference type="HAMAP" id="MF_00373">
    <property type="entry name" value="Ribosomal_bL28"/>
    <property type="match status" value="1"/>
</dbReference>
<dbReference type="InterPro" id="IPR026569">
    <property type="entry name" value="Ribosomal_bL28"/>
</dbReference>
<dbReference type="InterPro" id="IPR034704">
    <property type="entry name" value="Ribosomal_bL28/bL31-like_sf"/>
</dbReference>
<dbReference type="InterPro" id="IPR001383">
    <property type="entry name" value="Ribosomal_bL28_bact-type"/>
</dbReference>
<dbReference type="InterPro" id="IPR037147">
    <property type="entry name" value="Ribosomal_bL28_sf"/>
</dbReference>
<dbReference type="NCBIfam" id="TIGR00009">
    <property type="entry name" value="L28"/>
    <property type="match status" value="1"/>
</dbReference>
<dbReference type="PANTHER" id="PTHR13528">
    <property type="entry name" value="39S RIBOSOMAL PROTEIN L28, MITOCHONDRIAL"/>
    <property type="match status" value="1"/>
</dbReference>
<dbReference type="PANTHER" id="PTHR13528:SF2">
    <property type="entry name" value="LARGE RIBOSOMAL SUBUNIT PROTEIN BL28M"/>
    <property type="match status" value="1"/>
</dbReference>
<dbReference type="Pfam" id="PF00830">
    <property type="entry name" value="Ribosomal_L28"/>
    <property type="match status" value="1"/>
</dbReference>
<dbReference type="SUPFAM" id="SSF143800">
    <property type="entry name" value="L28p-like"/>
    <property type="match status" value="1"/>
</dbReference>